<name>RSGA_SALNS</name>
<evidence type="ECO:0000255" key="1">
    <source>
        <dbReference type="HAMAP-Rule" id="MF_01820"/>
    </source>
</evidence>
<evidence type="ECO:0000255" key="2">
    <source>
        <dbReference type="PROSITE-ProRule" id="PRU01058"/>
    </source>
</evidence>
<evidence type="ECO:0000256" key="3">
    <source>
        <dbReference type="SAM" id="MobiDB-lite"/>
    </source>
</evidence>
<accession>B4T2Q8</accession>
<proteinExistence type="inferred from homology"/>
<comment type="function">
    <text evidence="1">One of several proteins that assist in the late maturation steps of the functional core of the 30S ribosomal subunit. Helps release RbfA from mature subunits. May play a role in the assembly of ribosomal proteins into the subunit. Circularly permuted GTPase that catalyzes slow GTP hydrolysis, GTPase activity is stimulated by the 30S ribosomal subunit.</text>
</comment>
<comment type="cofactor">
    <cofactor evidence="1">
        <name>Zn(2+)</name>
        <dbReference type="ChEBI" id="CHEBI:29105"/>
    </cofactor>
    <text evidence="1">Binds 1 zinc ion per subunit.</text>
</comment>
<comment type="subunit">
    <text evidence="1">Monomer. Associates with 30S ribosomal subunit, binds 16S rRNA.</text>
</comment>
<comment type="subcellular location">
    <subcellularLocation>
        <location evidence="1">Cytoplasm</location>
    </subcellularLocation>
</comment>
<comment type="similarity">
    <text evidence="1">Belongs to the TRAFAC class YlqF/YawG GTPase family. RsgA subfamily.</text>
</comment>
<gene>
    <name evidence="1" type="primary">rsgA</name>
    <name type="ordered locus">SNSL254_A4710</name>
</gene>
<protein>
    <recommendedName>
        <fullName evidence="1">Small ribosomal subunit biogenesis GTPase RsgA</fullName>
        <ecNumber evidence="1">3.6.1.-</ecNumber>
    </recommendedName>
</protein>
<reference key="1">
    <citation type="journal article" date="2011" name="J. Bacteriol.">
        <title>Comparative genomics of 28 Salmonella enterica isolates: evidence for CRISPR-mediated adaptive sublineage evolution.</title>
        <authorList>
            <person name="Fricke W.F."/>
            <person name="Mammel M.K."/>
            <person name="McDermott P.F."/>
            <person name="Tartera C."/>
            <person name="White D.G."/>
            <person name="Leclerc J.E."/>
            <person name="Ravel J."/>
            <person name="Cebula T.A."/>
        </authorList>
    </citation>
    <scope>NUCLEOTIDE SEQUENCE [LARGE SCALE GENOMIC DNA]</scope>
    <source>
        <strain>SL254</strain>
    </source>
</reference>
<organism>
    <name type="scientific">Salmonella newport (strain SL254)</name>
    <dbReference type="NCBI Taxonomy" id="423368"/>
    <lineage>
        <taxon>Bacteria</taxon>
        <taxon>Pseudomonadati</taxon>
        <taxon>Pseudomonadota</taxon>
        <taxon>Gammaproteobacteria</taxon>
        <taxon>Enterobacterales</taxon>
        <taxon>Enterobacteriaceae</taxon>
        <taxon>Salmonella</taxon>
    </lineage>
</organism>
<feature type="chain" id="PRO_1000188136" description="Small ribosomal subunit biogenesis GTPase RsgA">
    <location>
        <begin position="1"/>
        <end position="350"/>
    </location>
</feature>
<feature type="domain" description="CP-type G" evidence="2">
    <location>
        <begin position="104"/>
        <end position="273"/>
    </location>
</feature>
<feature type="region of interest" description="Disordered" evidence="3">
    <location>
        <begin position="1"/>
        <end position="27"/>
    </location>
</feature>
<feature type="compositionally biased region" description="Polar residues" evidence="3">
    <location>
        <begin position="1"/>
        <end position="17"/>
    </location>
</feature>
<feature type="binding site" evidence="1">
    <location>
        <begin position="160"/>
        <end position="163"/>
    </location>
    <ligand>
        <name>GTP</name>
        <dbReference type="ChEBI" id="CHEBI:37565"/>
    </ligand>
</feature>
<feature type="binding site" evidence="1">
    <location>
        <begin position="214"/>
        <end position="222"/>
    </location>
    <ligand>
        <name>GTP</name>
        <dbReference type="ChEBI" id="CHEBI:37565"/>
    </ligand>
</feature>
<feature type="binding site" evidence="1">
    <location>
        <position position="297"/>
    </location>
    <ligand>
        <name>Zn(2+)</name>
        <dbReference type="ChEBI" id="CHEBI:29105"/>
    </ligand>
</feature>
<feature type="binding site" evidence="1">
    <location>
        <position position="302"/>
    </location>
    <ligand>
        <name>Zn(2+)</name>
        <dbReference type="ChEBI" id="CHEBI:29105"/>
    </ligand>
</feature>
<feature type="binding site" evidence="1">
    <location>
        <position position="304"/>
    </location>
    <ligand>
        <name>Zn(2+)</name>
        <dbReference type="ChEBI" id="CHEBI:29105"/>
    </ligand>
</feature>
<feature type="binding site" evidence="1">
    <location>
        <position position="310"/>
    </location>
    <ligand>
        <name>Zn(2+)</name>
        <dbReference type="ChEBI" id="CHEBI:29105"/>
    </ligand>
</feature>
<dbReference type="EC" id="3.6.1.-" evidence="1"/>
<dbReference type="EMBL" id="CP001113">
    <property type="protein sequence ID" value="ACF64255.1"/>
    <property type="molecule type" value="Genomic_DNA"/>
</dbReference>
<dbReference type="RefSeq" id="WP_000041945.1">
    <property type="nucleotide sequence ID" value="NZ_CCMR01000003.1"/>
</dbReference>
<dbReference type="SMR" id="B4T2Q8"/>
<dbReference type="KEGG" id="see:SNSL254_A4710"/>
<dbReference type="HOGENOM" id="CLU_033617_2_0_6"/>
<dbReference type="Proteomes" id="UP000008824">
    <property type="component" value="Chromosome"/>
</dbReference>
<dbReference type="GO" id="GO:0005737">
    <property type="term" value="C:cytoplasm"/>
    <property type="evidence" value="ECO:0007669"/>
    <property type="project" value="UniProtKB-SubCell"/>
</dbReference>
<dbReference type="GO" id="GO:0005525">
    <property type="term" value="F:GTP binding"/>
    <property type="evidence" value="ECO:0007669"/>
    <property type="project" value="UniProtKB-UniRule"/>
</dbReference>
<dbReference type="GO" id="GO:0003924">
    <property type="term" value="F:GTPase activity"/>
    <property type="evidence" value="ECO:0007669"/>
    <property type="project" value="UniProtKB-UniRule"/>
</dbReference>
<dbReference type="GO" id="GO:0046872">
    <property type="term" value="F:metal ion binding"/>
    <property type="evidence" value="ECO:0007669"/>
    <property type="project" value="UniProtKB-KW"/>
</dbReference>
<dbReference type="GO" id="GO:0019843">
    <property type="term" value="F:rRNA binding"/>
    <property type="evidence" value="ECO:0007669"/>
    <property type="project" value="UniProtKB-KW"/>
</dbReference>
<dbReference type="GO" id="GO:0042274">
    <property type="term" value="P:ribosomal small subunit biogenesis"/>
    <property type="evidence" value="ECO:0007669"/>
    <property type="project" value="UniProtKB-UniRule"/>
</dbReference>
<dbReference type="CDD" id="cd01854">
    <property type="entry name" value="YjeQ_EngC"/>
    <property type="match status" value="1"/>
</dbReference>
<dbReference type="FunFam" id="1.10.40.50:FF:000001">
    <property type="entry name" value="Small ribosomal subunit biogenesis GTPase RsgA"/>
    <property type="match status" value="1"/>
</dbReference>
<dbReference type="FunFam" id="3.40.50.300:FF:000389">
    <property type="entry name" value="Small ribosomal subunit biogenesis GTPase RsgA"/>
    <property type="match status" value="1"/>
</dbReference>
<dbReference type="Gene3D" id="2.40.50.140">
    <property type="entry name" value="Nucleic acid-binding proteins"/>
    <property type="match status" value="1"/>
</dbReference>
<dbReference type="Gene3D" id="3.40.50.300">
    <property type="entry name" value="P-loop containing nucleotide triphosphate hydrolases"/>
    <property type="match status" value="1"/>
</dbReference>
<dbReference type="Gene3D" id="1.10.40.50">
    <property type="entry name" value="Probable gtpase engc, domain 3"/>
    <property type="match status" value="1"/>
</dbReference>
<dbReference type="HAMAP" id="MF_01820">
    <property type="entry name" value="GTPase_RsgA"/>
    <property type="match status" value="1"/>
</dbReference>
<dbReference type="InterPro" id="IPR030378">
    <property type="entry name" value="G_CP_dom"/>
</dbReference>
<dbReference type="InterPro" id="IPR012340">
    <property type="entry name" value="NA-bd_OB-fold"/>
</dbReference>
<dbReference type="InterPro" id="IPR027417">
    <property type="entry name" value="P-loop_NTPase"/>
</dbReference>
<dbReference type="InterPro" id="IPR004881">
    <property type="entry name" value="Ribosome_biogen_GTPase_RsgA"/>
</dbReference>
<dbReference type="InterPro" id="IPR010914">
    <property type="entry name" value="RsgA_GTPase_dom"/>
</dbReference>
<dbReference type="NCBIfam" id="NF008931">
    <property type="entry name" value="PRK12288.1"/>
    <property type="match status" value="1"/>
</dbReference>
<dbReference type="NCBIfam" id="TIGR00157">
    <property type="entry name" value="ribosome small subunit-dependent GTPase A"/>
    <property type="match status" value="1"/>
</dbReference>
<dbReference type="PANTHER" id="PTHR32120">
    <property type="entry name" value="SMALL RIBOSOMAL SUBUNIT BIOGENESIS GTPASE RSGA"/>
    <property type="match status" value="1"/>
</dbReference>
<dbReference type="PANTHER" id="PTHR32120:SF11">
    <property type="entry name" value="SMALL RIBOSOMAL SUBUNIT BIOGENESIS GTPASE RSGA 1, MITOCHONDRIAL-RELATED"/>
    <property type="match status" value="1"/>
</dbReference>
<dbReference type="Pfam" id="PF03193">
    <property type="entry name" value="RsgA_GTPase"/>
    <property type="match status" value="1"/>
</dbReference>
<dbReference type="SUPFAM" id="SSF52540">
    <property type="entry name" value="P-loop containing nucleoside triphosphate hydrolases"/>
    <property type="match status" value="1"/>
</dbReference>
<dbReference type="PROSITE" id="PS50936">
    <property type="entry name" value="ENGC_GTPASE"/>
    <property type="match status" value="1"/>
</dbReference>
<dbReference type="PROSITE" id="PS51721">
    <property type="entry name" value="G_CP"/>
    <property type="match status" value="1"/>
</dbReference>
<sequence length="350" mass="38948">MSKNKLSKGQQRRVNANHQRRLKTSAEKADYDDNLFGEPAEGIVISRFGMHADVESADGEVHRCNIRRTIRSLVTGDRVVWRPGKAAAEGVNVKGIVEAVHERTSVLTRPDFYDGVKPIAANIDQIVIVSAILPELSLNIIDRYLVGCETLQVEPLIVLNKIDLLDDEGMDFVNEQMDIYRNIGYRVLMVSSHTQDGLKPLEEALTGRISIFAGQSGVGKSSLLNALLGLQNEILTNDVSNVSGLGQHTTTAARLYHFPHGGDVIDSPGVREFGLWHLEPEQITQGFVEFHDYLGHCKYRDCKHDADPGCAIREAVENGAIAETRFENYHRILESMAQVKTRKNFSDTDD</sequence>
<keyword id="KW-0963">Cytoplasm</keyword>
<keyword id="KW-0342">GTP-binding</keyword>
<keyword id="KW-0378">Hydrolase</keyword>
<keyword id="KW-0479">Metal-binding</keyword>
<keyword id="KW-0547">Nucleotide-binding</keyword>
<keyword id="KW-0690">Ribosome biogenesis</keyword>
<keyword id="KW-0694">RNA-binding</keyword>
<keyword id="KW-0699">rRNA-binding</keyword>
<keyword id="KW-0862">Zinc</keyword>